<organism>
    <name type="scientific">Prosthecochloris aestuarii (strain DSM 271 / SK 413)</name>
    <dbReference type="NCBI Taxonomy" id="290512"/>
    <lineage>
        <taxon>Bacteria</taxon>
        <taxon>Pseudomonadati</taxon>
        <taxon>Chlorobiota</taxon>
        <taxon>Chlorobiia</taxon>
        <taxon>Chlorobiales</taxon>
        <taxon>Chlorobiaceae</taxon>
        <taxon>Prosthecochloris</taxon>
    </lineage>
</organism>
<feature type="chain" id="PRO_1000141596" description="Large ribosomal subunit protein uL2">
    <location>
        <begin position="1"/>
        <end position="279"/>
    </location>
</feature>
<feature type="region of interest" description="Disordered" evidence="2">
    <location>
        <begin position="223"/>
        <end position="279"/>
    </location>
</feature>
<feature type="compositionally biased region" description="Gly residues" evidence="2">
    <location>
        <begin position="232"/>
        <end position="242"/>
    </location>
</feature>
<feature type="compositionally biased region" description="Basic residues" evidence="2">
    <location>
        <begin position="259"/>
        <end position="279"/>
    </location>
</feature>
<name>RL2_PROA2</name>
<proteinExistence type="inferred from homology"/>
<accession>B4S5M4</accession>
<comment type="function">
    <text evidence="1">One of the primary rRNA binding proteins. Required for association of the 30S and 50S subunits to form the 70S ribosome, for tRNA binding and peptide bond formation. It has been suggested to have peptidyltransferase activity; this is somewhat controversial. Makes several contacts with the 16S rRNA in the 70S ribosome.</text>
</comment>
<comment type="subunit">
    <text evidence="1">Part of the 50S ribosomal subunit. Forms a bridge to the 30S subunit in the 70S ribosome.</text>
</comment>
<comment type="similarity">
    <text evidence="1">Belongs to the universal ribosomal protein uL2 family.</text>
</comment>
<keyword id="KW-0687">Ribonucleoprotein</keyword>
<keyword id="KW-0689">Ribosomal protein</keyword>
<keyword id="KW-0694">RNA-binding</keyword>
<keyword id="KW-0699">rRNA-binding</keyword>
<gene>
    <name evidence="1" type="primary">rplB</name>
    <name type="ordered locus">Paes_2061</name>
</gene>
<evidence type="ECO:0000255" key="1">
    <source>
        <dbReference type="HAMAP-Rule" id="MF_01320"/>
    </source>
</evidence>
<evidence type="ECO:0000256" key="2">
    <source>
        <dbReference type="SAM" id="MobiDB-lite"/>
    </source>
</evidence>
<evidence type="ECO:0000305" key="3"/>
<sequence length="279" mass="30423">MAIRKLRPVTPASRYLSYPEFDEITKSEPEKSLLAPLKKSGGRNKAGRITSRHRGGGHKRFYRIIDFKRNKDNIPATVAAIEYDPNRSARIALLHYVDGEKRYILAPKGLKVGEQLLSGDKVEVKPGNTMPLKNIPLGTDIHNIEMKAGKGGQIVRSAGAYAVLAAKEGDYATLKLPSGEIRKVRIECRATIGGVGNADHENIVLGKAGRSRWLGVRPQTRGMAMNPVDHPMGGGEGKSKSGGGRKHPKSPWGQLAKGLKTRNKKKASSKLIVRGRKSK</sequence>
<reference key="1">
    <citation type="submission" date="2008-06" db="EMBL/GenBank/DDBJ databases">
        <title>Complete sequence of chromosome of Prosthecochloris aestuarii DSM 271.</title>
        <authorList>
            <consortium name="US DOE Joint Genome Institute"/>
            <person name="Lucas S."/>
            <person name="Copeland A."/>
            <person name="Lapidus A."/>
            <person name="Glavina del Rio T."/>
            <person name="Dalin E."/>
            <person name="Tice H."/>
            <person name="Bruce D."/>
            <person name="Goodwin L."/>
            <person name="Pitluck S."/>
            <person name="Schmutz J."/>
            <person name="Larimer F."/>
            <person name="Land M."/>
            <person name="Hauser L."/>
            <person name="Kyrpides N."/>
            <person name="Anderson I."/>
            <person name="Liu Z."/>
            <person name="Li T."/>
            <person name="Zhao F."/>
            <person name="Overmann J."/>
            <person name="Bryant D.A."/>
            <person name="Richardson P."/>
        </authorList>
    </citation>
    <scope>NUCLEOTIDE SEQUENCE [LARGE SCALE GENOMIC DNA]</scope>
    <source>
        <strain>DSM 271 / SK 413</strain>
    </source>
</reference>
<protein>
    <recommendedName>
        <fullName evidence="1">Large ribosomal subunit protein uL2</fullName>
    </recommendedName>
    <alternativeName>
        <fullName evidence="3">50S ribosomal protein L2</fullName>
    </alternativeName>
</protein>
<dbReference type="EMBL" id="CP001108">
    <property type="protein sequence ID" value="ACF47071.1"/>
    <property type="molecule type" value="Genomic_DNA"/>
</dbReference>
<dbReference type="RefSeq" id="WP_012506603.1">
    <property type="nucleotide sequence ID" value="NC_011059.1"/>
</dbReference>
<dbReference type="SMR" id="B4S5M4"/>
<dbReference type="STRING" id="290512.Paes_2061"/>
<dbReference type="KEGG" id="paa:Paes_2061"/>
<dbReference type="eggNOG" id="COG0090">
    <property type="taxonomic scope" value="Bacteria"/>
</dbReference>
<dbReference type="HOGENOM" id="CLU_036235_2_1_10"/>
<dbReference type="Proteomes" id="UP000002725">
    <property type="component" value="Chromosome"/>
</dbReference>
<dbReference type="GO" id="GO:0015934">
    <property type="term" value="C:large ribosomal subunit"/>
    <property type="evidence" value="ECO:0007669"/>
    <property type="project" value="InterPro"/>
</dbReference>
<dbReference type="GO" id="GO:0019843">
    <property type="term" value="F:rRNA binding"/>
    <property type="evidence" value="ECO:0007669"/>
    <property type="project" value="UniProtKB-UniRule"/>
</dbReference>
<dbReference type="GO" id="GO:0003735">
    <property type="term" value="F:structural constituent of ribosome"/>
    <property type="evidence" value="ECO:0007669"/>
    <property type="project" value="InterPro"/>
</dbReference>
<dbReference type="GO" id="GO:0016740">
    <property type="term" value="F:transferase activity"/>
    <property type="evidence" value="ECO:0007669"/>
    <property type="project" value="InterPro"/>
</dbReference>
<dbReference type="GO" id="GO:0002181">
    <property type="term" value="P:cytoplasmic translation"/>
    <property type="evidence" value="ECO:0007669"/>
    <property type="project" value="TreeGrafter"/>
</dbReference>
<dbReference type="FunFam" id="2.30.30.30:FF:000001">
    <property type="entry name" value="50S ribosomal protein L2"/>
    <property type="match status" value="1"/>
</dbReference>
<dbReference type="FunFam" id="2.40.50.140:FF:000003">
    <property type="entry name" value="50S ribosomal protein L2"/>
    <property type="match status" value="1"/>
</dbReference>
<dbReference type="FunFam" id="4.10.950.10:FF:000001">
    <property type="entry name" value="50S ribosomal protein L2"/>
    <property type="match status" value="1"/>
</dbReference>
<dbReference type="Gene3D" id="2.30.30.30">
    <property type="match status" value="1"/>
</dbReference>
<dbReference type="Gene3D" id="2.40.50.140">
    <property type="entry name" value="Nucleic acid-binding proteins"/>
    <property type="match status" value="1"/>
</dbReference>
<dbReference type="Gene3D" id="4.10.950.10">
    <property type="entry name" value="Ribosomal protein L2, domain 3"/>
    <property type="match status" value="1"/>
</dbReference>
<dbReference type="HAMAP" id="MF_01320_B">
    <property type="entry name" value="Ribosomal_uL2_B"/>
    <property type="match status" value="1"/>
</dbReference>
<dbReference type="InterPro" id="IPR012340">
    <property type="entry name" value="NA-bd_OB-fold"/>
</dbReference>
<dbReference type="InterPro" id="IPR014722">
    <property type="entry name" value="Rib_uL2_dom2"/>
</dbReference>
<dbReference type="InterPro" id="IPR002171">
    <property type="entry name" value="Ribosomal_uL2"/>
</dbReference>
<dbReference type="InterPro" id="IPR005880">
    <property type="entry name" value="Ribosomal_uL2_bac/org-type"/>
</dbReference>
<dbReference type="InterPro" id="IPR022669">
    <property type="entry name" value="Ribosomal_uL2_C"/>
</dbReference>
<dbReference type="InterPro" id="IPR014726">
    <property type="entry name" value="Ribosomal_uL2_dom3"/>
</dbReference>
<dbReference type="InterPro" id="IPR022666">
    <property type="entry name" value="Ribosomal_uL2_RNA-bd_dom"/>
</dbReference>
<dbReference type="InterPro" id="IPR008991">
    <property type="entry name" value="Translation_prot_SH3-like_sf"/>
</dbReference>
<dbReference type="NCBIfam" id="TIGR01171">
    <property type="entry name" value="rplB_bact"/>
    <property type="match status" value="1"/>
</dbReference>
<dbReference type="PANTHER" id="PTHR13691:SF5">
    <property type="entry name" value="LARGE RIBOSOMAL SUBUNIT PROTEIN UL2M"/>
    <property type="match status" value="1"/>
</dbReference>
<dbReference type="PANTHER" id="PTHR13691">
    <property type="entry name" value="RIBOSOMAL PROTEIN L2"/>
    <property type="match status" value="1"/>
</dbReference>
<dbReference type="Pfam" id="PF00181">
    <property type="entry name" value="Ribosomal_L2"/>
    <property type="match status" value="1"/>
</dbReference>
<dbReference type="Pfam" id="PF03947">
    <property type="entry name" value="Ribosomal_L2_C"/>
    <property type="match status" value="1"/>
</dbReference>
<dbReference type="PIRSF" id="PIRSF002158">
    <property type="entry name" value="Ribosomal_L2"/>
    <property type="match status" value="1"/>
</dbReference>
<dbReference type="SMART" id="SM01383">
    <property type="entry name" value="Ribosomal_L2"/>
    <property type="match status" value="1"/>
</dbReference>
<dbReference type="SMART" id="SM01382">
    <property type="entry name" value="Ribosomal_L2_C"/>
    <property type="match status" value="1"/>
</dbReference>
<dbReference type="SUPFAM" id="SSF50249">
    <property type="entry name" value="Nucleic acid-binding proteins"/>
    <property type="match status" value="1"/>
</dbReference>
<dbReference type="SUPFAM" id="SSF50104">
    <property type="entry name" value="Translation proteins SH3-like domain"/>
    <property type="match status" value="1"/>
</dbReference>